<dbReference type="EMBL" id="AB025225">
    <property type="protein sequence ID" value="BAA83790.1"/>
    <property type="molecule type" value="Genomic_DNA"/>
</dbReference>
<dbReference type="SMR" id="Q9S0Y6"/>
<dbReference type="STRING" id="1911.GCA_001715295_02417"/>
<dbReference type="GO" id="GO:0043531">
    <property type="term" value="F:ADP binding"/>
    <property type="evidence" value="ECO:0007669"/>
    <property type="project" value="InterPro"/>
</dbReference>
<dbReference type="GO" id="GO:0005524">
    <property type="term" value="F:ATP binding"/>
    <property type="evidence" value="ECO:0007669"/>
    <property type="project" value="UniProtKB-KW"/>
</dbReference>
<dbReference type="GO" id="GO:0003677">
    <property type="term" value="F:DNA binding"/>
    <property type="evidence" value="ECO:0007669"/>
    <property type="project" value="UniProtKB-KW"/>
</dbReference>
<dbReference type="GO" id="GO:0031409">
    <property type="term" value="F:pigment binding"/>
    <property type="evidence" value="ECO:0007669"/>
    <property type="project" value="UniProtKB-KW"/>
</dbReference>
<dbReference type="GO" id="GO:0017000">
    <property type="term" value="P:antibiotic biosynthetic process"/>
    <property type="evidence" value="ECO:0007669"/>
    <property type="project" value="UniProtKB-KW"/>
</dbReference>
<dbReference type="GO" id="GO:0000160">
    <property type="term" value="P:phosphorelay signal transduction system"/>
    <property type="evidence" value="ECO:0007669"/>
    <property type="project" value="UniProtKB-KW"/>
</dbReference>
<dbReference type="GO" id="GO:0006355">
    <property type="term" value="P:regulation of DNA-templated transcription"/>
    <property type="evidence" value="ECO:0007669"/>
    <property type="project" value="InterPro"/>
</dbReference>
<dbReference type="CDD" id="cd15831">
    <property type="entry name" value="BTAD"/>
    <property type="match status" value="1"/>
</dbReference>
<dbReference type="Gene3D" id="3.40.50.300">
    <property type="entry name" value="P-loop containing nucleotide triphosphate hydrolases"/>
    <property type="match status" value="1"/>
</dbReference>
<dbReference type="Gene3D" id="1.25.40.10">
    <property type="entry name" value="Tetratricopeptide repeat domain"/>
    <property type="match status" value="3"/>
</dbReference>
<dbReference type="Gene3D" id="1.10.10.10">
    <property type="entry name" value="Winged helix-like DNA-binding domain superfamily/Winged helix DNA-binding domain"/>
    <property type="match status" value="1"/>
</dbReference>
<dbReference type="InterPro" id="IPR051677">
    <property type="entry name" value="AfsR-DnrI-RedD_regulator"/>
</dbReference>
<dbReference type="InterPro" id="IPR005158">
    <property type="entry name" value="BTAD"/>
</dbReference>
<dbReference type="InterPro" id="IPR002182">
    <property type="entry name" value="NB-ARC"/>
</dbReference>
<dbReference type="InterPro" id="IPR001867">
    <property type="entry name" value="OmpR/PhoB-type_DNA-bd"/>
</dbReference>
<dbReference type="InterPro" id="IPR027417">
    <property type="entry name" value="P-loop_NTPase"/>
</dbReference>
<dbReference type="InterPro" id="IPR016032">
    <property type="entry name" value="Sig_transdc_resp-reg_C-effctor"/>
</dbReference>
<dbReference type="InterPro" id="IPR011990">
    <property type="entry name" value="TPR-like_helical_dom_sf"/>
</dbReference>
<dbReference type="InterPro" id="IPR019734">
    <property type="entry name" value="TPR_rpt"/>
</dbReference>
<dbReference type="InterPro" id="IPR036388">
    <property type="entry name" value="WH-like_DNA-bd_sf"/>
</dbReference>
<dbReference type="PANTHER" id="PTHR35807:SF1">
    <property type="entry name" value="TRANSCRIPTIONAL REGULATOR REDD"/>
    <property type="match status" value="1"/>
</dbReference>
<dbReference type="PANTHER" id="PTHR35807">
    <property type="entry name" value="TRANSCRIPTIONAL REGULATOR REDD-RELATED"/>
    <property type="match status" value="1"/>
</dbReference>
<dbReference type="Pfam" id="PF03704">
    <property type="entry name" value="BTAD"/>
    <property type="match status" value="1"/>
</dbReference>
<dbReference type="Pfam" id="PF00931">
    <property type="entry name" value="NB-ARC"/>
    <property type="match status" value="1"/>
</dbReference>
<dbReference type="Pfam" id="PF13424">
    <property type="entry name" value="TPR_12"/>
    <property type="match status" value="1"/>
</dbReference>
<dbReference type="Pfam" id="PF00486">
    <property type="entry name" value="Trans_reg_C"/>
    <property type="match status" value="1"/>
</dbReference>
<dbReference type="PRINTS" id="PR00364">
    <property type="entry name" value="DISEASERSIST"/>
</dbReference>
<dbReference type="SMART" id="SM01043">
    <property type="entry name" value="BTAD"/>
    <property type="match status" value="1"/>
</dbReference>
<dbReference type="SMART" id="SM00028">
    <property type="entry name" value="TPR"/>
    <property type="match status" value="3"/>
</dbReference>
<dbReference type="SMART" id="SM00862">
    <property type="entry name" value="Trans_reg_C"/>
    <property type="match status" value="1"/>
</dbReference>
<dbReference type="SUPFAM" id="SSF46894">
    <property type="entry name" value="C-terminal effector domain of the bipartite response regulators"/>
    <property type="match status" value="1"/>
</dbReference>
<dbReference type="SUPFAM" id="SSF52540">
    <property type="entry name" value="P-loop containing nucleoside triphosphate hydrolases"/>
    <property type="match status" value="1"/>
</dbReference>
<dbReference type="SUPFAM" id="SSF48452">
    <property type="entry name" value="TPR-like"/>
    <property type="match status" value="3"/>
</dbReference>
<dbReference type="PROSITE" id="PS51755">
    <property type="entry name" value="OMPR_PHOB"/>
    <property type="match status" value="1"/>
</dbReference>
<evidence type="ECO:0000255" key="1">
    <source>
        <dbReference type="PROSITE-ProRule" id="PRU01091"/>
    </source>
</evidence>
<evidence type="ECO:0000269" key="2">
    <source>
    </source>
</evidence>
<evidence type="ECO:0000305" key="3"/>
<name>AFSR_STRGR</name>
<comment type="function">
    <text evidence="2">Component of the AfsK/AfsR system involved in the response of aerial mycelium formation to glucose.</text>
</comment>
<comment type="PTM">
    <text evidence="2">Phosphorylated on serines and threonines by AfsK.</text>
</comment>
<comment type="similarity">
    <text evidence="3">Belongs to the AfsR/DnrI/RedD regulatory family.</text>
</comment>
<keyword id="KW-0010">Activator</keyword>
<keyword id="KW-0045">Antibiotic biosynthesis</keyword>
<keyword id="KW-0067">ATP-binding</keyword>
<keyword id="KW-0238">DNA-binding</keyword>
<keyword id="KW-0547">Nucleotide-binding</keyword>
<keyword id="KW-0597">Phosphoprotein</keyword>
<keyword id="KW-0608">Pigment</keyword>
<keyword id="KW-0677">Repeat</keyword>
<keyword id="KW-0802">TPR repeat</keyword>
<keyword id="KW-0804">Transcription</keyword>
<keyword id="KW-0805">Transcription regulation</keyword>
<keyword id="KW-0902">Two-component regulatory system</keyword>
<sequence>MDRDNGPRVRVPEQRTPSIPATADALRFTVLGPVRAWRGSELLSSGSPQQRALLTALLLREGRTATAGELIDAFWGEDPPSQALATIRTYASRLRKILGQDTLVSESGGYAIRTERSALDLTLAQDLAAEAEKARAAGDRCQARTLINKVLGLWDGEALASVPGPYADNQRTRLEEWRLQLTETRLDLDLEVGCHAEAVSELTALTAAHPLRERLRELLMVALYRSGRQAEALAVYADTRRLLAEELGVDPRPELAELQQRILRADEELARPADEPAPAPAPLKPAQLPATVPDFTGRSAFVTELGSRLATAEGSVMAVSAVAGIGGVGKTTLAVHVAHQARRHFPDGQLYVDLQGAGARAAEPETVLGSFLRALGTADSAIPDTLDERAALYRSTLDGRRILILLDNAHDAAQIRPLLPGTPGCAALVTSRVRMVDLAGAHLVDLDVMSPEEALQLFTRIVGAERVGAEREAALDVVAACGFLPLAIRIAASRLAARRTWTVSVLAAKLADERRRLDELQAGDLTVKATFELGYGQLEPAQAHAFRLLGLADGPDISLAAAAALLDLDPHVAEDLLEALVDTSLVESAAPGRYRYHDLVRLYARACAERDEQPPVRRELALSRLLDFYLATAAGVYALERPGERVLDHFTPTEYPGLTFPAREAALDWLFTESSGLLACARQSAAIGMPQRAADLLMAVVDLGESGANSHQFATAAKAVSEAAKAAGVPRAEARARTMLSHVHSVSGRFAEAEAEAMRALDLGRLAQDAVSQGQAPNQRGIIALYENRHDDAEAHLTQALTAFRADGNKPGEAAALCNLSRVHLATGRTATAVRLAEEGVAIYDSDASGLALIGSGRTDPARHVLLEALQIFRESRQQLWHGMTLFRLSELHLTEQEGAQAAAHAEQSLVVLRGIGGDWRRANVLTVLGRALTVIGQTDRAQVCWGEALTVFEELGSPEAEAVRQLLDPAGVG</sequence>
<feature type="chain" id="PRO_0000362162" description="Regulatory protein AfsR">
    <location>
        <begin position="1"/>
        <end position="974"/>
    </location>
</feature>
<feature type="domain" description="NB-ARC">
    <location>
        <begin position="274"/>
        <end position="591"/>
    </location>
</feature>
<feature type="repeat" description="TPR 1">
    <location>
        <begin position="814"/>
        <end position="847"/>
    </location>
</feature>
<feature type="repeat" description="TPR 2">
    <location>
        <begin position="923"/>
        <end position="956"/>
    </location>
</feature>
<feature type="DNA-binding region" description="OmpR/PhoB-type" evidence="1">
    <location>
        <begin position="17"/>
        <end position="114"/>
    </location>
</feature>
<proteinExistence type="evidence at protein level"/>
<protein>
    <recommendedName>
        <fullName>Regulatory protein AfsR</fullName>
    </recommendedName>
</protein>
<organism>
    <name type="scientific">Streptomyces griseus</name>
    <dbReference type="NCBI Taxonomy" id="1911"/>
    <lineage>
        <taxon>Bacteria</taxon>
        <taxon>Bacillati</taxon>
        <taxon>Actinomycetota</taxon>
        <taxon>Actinomycetes</taxon>
        <taxon>Kitasatosporales</taxon>
        <taxon>Streptomycetaceae</taxon>
        <taxon>Streptomyces</taxon>
    </lineage>
</organism>
<gene>
    <name type="primary">afsR</name>
</gene>
<reference key="1">
    <citation type="journal article" date="1999" name="Microbiology">
        <title>An AfsK/AfsR system involved in the response of aerial mycelium formation to glucose in Streptomyces griseus.</title>
        <authorList>
            <person name="Umeyama T."/>
            <person name="Lee P.-C."/>
            <person name="Ueda K."/>
            <person name="Horinouchi S."/>
        </authorList>
    </citation>
    <scope>NUCLEOTIDE SEQUENCE [GENOMIC DNA]</scope>
    <scope>FUNCTION</scope>
    <scope>PHOSPHORYLATION</scope>
</reference>
<accession>Q9S0Y6</accession>